<evidence type="ECO:0000255" key="1">
    <source>
        <dbReference type="PROSITE-ProRule" id="PRU00625"/>
    </source>
</evidence>
<evidence type="ECO:0000256" key="2">
    <source>
        <dbReference type="SAM" id="MobiDB-lite"/>
    </source>
</evidence>
<evidence type="ECO:0000269" key="3">
    <source>
    </source>
</evidence>
<evidence type="ECO:0000269" key="4">
    <source>
    </source>
</evidence>
<evidence type="ECO:0000303" key="5">
    <source>
    </source>
</evidence>
<evidence type="ECO:0000303" key="6">
    <source>
    </source>
</evidence>
<evidence type="ECO:0000305" key="7"/>
<evidence type="ECO:0000312" key="8">
    <source>
        <dbReference type="Araport" id="AT5G11050"/>
    </source>
</evidence>
<evidence type="ECO:0000312" key="9">
    <source>
        <dbReference type="EMBL" id="CAC03453.1"/>
    </source>
</evidence>
<reference key="1">
    <citation type="journal article" date="2001" name="Curr. Opin. Plant Biol.">
        <title>The R2R3-MYB gene family in Arabidopsis thaliana.</title>
        <authorList>
            <person name="Stracke R."/>
            <person name="Werber M."/>
            <person name="Weisshaar B."/>
        </authorList>
    </citation>
    <scope>NUCLEOTIDE SEQUENCE [MRNA]</scope>
    <scope>GENE FAMILY</scope>
    <scope>NOMENCLATURE</scope>
    <source>
        <strain>cv. Columbia</strain>
    </source>
</reference>
<reference key="2">
    <citation type="submission" date="2004-01" db="EMBL/GenBank/DDBJ databases">
        <title>The MYB transcription factor family in Arabidopsis: a genome-wide cloning and expression pattern analysis.</title>
        <authorList>
            <person name="Qu L.-J."/>
            <person name="Gu H."/>
        </authorList>
    </citation>
    <scope>NUCLEOTIDE SEQUENCE [MRNA]</scope>
</reference>
<reference key="3">
    <citation type="journal article" date="2000" name="Nature">
        <title>Sequence and analysis of chromosome 5 of the plant Arabidopsis thaliana.</title>
        <authorList>
            <person name="Tabata S."/>
            <person name="Kaneko T."/>
            <person name="Nakamura Y."/>
            <person name="Kotani H."/>
            <person name="Kato T."/>
            <person name="Asamizu E."/>
            <person name="Miyajima N."/>
            <person name="Sasamoto S."/>
            <person name="Kimura T."/>
            <person name="Hosouchi T."/>
            <person name="Kawashima K."/>
            <person name="Kohara M."/>
            <person name="Matsumoto M."/>
            <person name="Matsuno A."/>
            <person name="Muraki A."/>
            <person name="Nakayama S."/>
            <person name="Nakazaki N."/>
            <person name="Naruo K."/>
            <person name="Okumura S."/>
            <person name="Shinpo S."/>
            <person name="Takeuchi C."/>
            <person name="Wada T."/>
            <person name="Watanabe A."/>
            <person name="Yamada M."/>
            <person name="Yasuda M."/>
            <person name="Sato S."/>
            <person name="de la Bastide M."/>
            <person name="Huang E."/>
            <person name="Spiegel L."/>
            <person name="Gnoj L."/>
            <person name="O'Shaughnessy A."/>
            <person name="Preston R."/>
            <person name="Habermann K."/>
            <person name="Murray J."/>
            <person name="Johnson D."/>
            <person name="Rohlfing T."/>
            <person name="Nelson J."/>
            <person name="Stoneking T."/>
            <person name="Pepin K."/>
            <person name="Spieth J."/>
            <person name="Sekhon M."/>
            <person name="Armstrong J."/>
            <person name="Becker M."/>
            <person name="Belter E."/>
            <person name="Cordum H."/>
            <person name="Cordes M."/>
            <person name="Courtney L."/>
            <person name="Courtney W."/>
            <person name="Dante M."/>
            <person name="Du H."/>
            <person name="Edwards J."/>
            <person name="Fryman J."/>
            <person name="Haakensen B."/>
            <person name="Lamar E."/>
            <person name="Latreille P."/>
            <person name="Leonard S."/>
            <person name="Meyer R."/>
            <person name="Mulvaney E."/>
            <person name="Ozersky P."/>
            <person name="Riley A."/>
            <person name="Strowmatt C."/>
            <person name="Wagner-McPherson C."/>
            <person name="Wollam A."/>
            <person name="Yoakum M."/>
            <person name="Bell M."/>
            <person name="Dedhia N."/>
            <person name="Parnell L."/>
            <person name="Shah R."/>
            <person name="Rodriguez M."/>
            <person name="Hoon See L."/>
            <person name="Vil D."/>
            <person name="Baker J."/>
            <person name="Kirchoff K."/>
            <person name="Toth K."/>
            <person name="King L."/>
            <person name="Bahret A."/>
            <person name="Miller B."/>
            <person name="Marra M.A."/>
            <person name="Martienssen R."/>
            <person name="McCombie W.R."/>
            <person name="Wilson R.K."/>
            <person name="Murphy G."/>
            <person name="Bancroft I."/>
            <person name="Volckaert G."/>
            <person name="Wambutt R."/>
            <person name="Duesterhoeft A."/>
            <person name="Stiekema W."/>
            <person name="Pohl T."/>
            <person name="Entian K.-D."/>
            <person name="Terryn N."/>
            <person name="Hartley N."/>
            <person name="Bent E."/>
            <person name="Johnson S."/>
            <person name="Langham S.-A."/>
            <person name="McCullagh B."/>
            <person name="Robben J."/>
            <person name="Grymonprez B."/>
            <person name="Zimmermann W."/>
            <person name="Ramsperger U."/>
            <person name="Wedler H."/>
            <person name="Balke K."/>
            <person name="Wedler E."/>
            <person name="Peters S."/>
            <person name="van Staveren M."/>
            <person name="Dirkse W."/>
            <person name="Mooijman P."/>
            <person name="Klein Lankhorst R."/>
            <person name="Weitzenegger T."/>
            <person name="Bothe G."/>
            <person name="Rose M."/>
            <person name="Hauf J."/>
            <person name="Berneiser S."/>
            <person name="Hempel S."/>
            <person name="Feldpausch M."/>
            <person name="Lamberth S."/>
            <person name="Villarroel R."/>
            <person name="Gielen J."/>
            <person name="Ardiles W."/>
            <person name="Bents O."/>
            <person name="Lemcke K."/>
            <person name="Kolesov G."/>
            <person name="Mayer K.F.X."/>
            <person name="Rudd S."/>
            <person name="Schoof H."/>
            <person name="Schueller C."/>
            <person name="Zaccaria P."/>
            <person name="Mewes H.-W."/>
            <person name="Bevan M."/>
            <person name="Fransz P.F."/>
        </authorList>
    </citation>
    <scope>NUCLEOTIDE SEQUENCE [LARGE SCALE GENOMIC DNA]</scope>
    <source>
        <strain>cv. Columbia</strain>
    </source>
</reference>
<reference key="4">
    <citation type="journal article" date="2017" name="Plant J.">
        <title>Araport11: a complete reannotation of the Arabidopsis thaliana reference genome.</title>
        <authorList>
            <person name="Cheng C.Y."/>
            <person name="Krishnakumar V."/>
            <person name="Chan A.P."/>
            <person name="Thibaud-Nissen F."/>
            <person name="Schobel S."/>
            <person name="Town C.D."/>
        </authorList>
    </citation>
    <scope>GENOME REANNOTATION</scope>
    <source>
        <strain>cv. Columbia</strain>
    </source>
</reference>
<reference key="5">
    <citation type="journal article" date="2013" name="Plant J.">
        <title>A GAL4-based targeted activation tagging system in Arabidopsis thaliana.</title>
        <authorList>
            <person name="Waki T."/>
            <person name="Miyashima S."/>
            <person name="Nakanishi M."/>
            <person name="Ikeda Y."/>
            <person name="Hashimoto T."/>
            <person name="Nakajima K."/>
        </authorList>
    </citation>
    <scope>FUNCTION</scope>
</reference>
<reference key="6">
    <citation type="journal article" date="2013" name="PLoS Genet.">
        <title>MYB64 and MYB119 are required for cellularization and differentiation during female gametogenesis in Arabidopsis thaliana.</title>
        <authorList>
            <person name="Rabiger D.S."/>
            <person name="Drews G.N."/>
        </authorList>
    </citation>
    <scope>FUNCTION</scope>
    <scope>SUBCELLULAR LOCATION</scope>
    <scope>TISSUE SPECIFICITY</scope>
    <scope>DEVELOPMENTAL STAGE</scope>
    <scope>DISRUPTION PHENOTYPE</scope>
</reference>
<proteinExistence type="evidence at transcript level"/>
<organism>
    <name type="scientific">Arabidopsis thaliana</name>
    <name type="common">Mouse-ear cress</name>
    <dbReference type="NCBI Taxonomy" id="3702"/>
    <lineage>
        <taxon>Eukaryota</taxon>
        <taxon>Viridiplantae</taxon>
        <taxon>Streptophyta</taxon>
        <taxon>Embryophyta</taxon>
        <taxon>Tracheophyta</taxon>
        <taxon>Spermatophyta</taxon>
        <taxon>Magnoliopsida</taxon>
        <taxon>eudicotyledons</taxon>
        <taxon>Gunneridae</taxon>
        <taxon>Pentapetalae</taxon>
        <taxon>rosids</taxon>
        <taxon>malvids</taxon>
        <taxon>Brassicales</taxon>
        <taxon>Brassicaceae</taxon>
        <taxon>Camelineae</taxon>
        <taxon>Arabidopsis</taxon>
    </lineage>
</organism>
<protein>
    <recommendedName>
        <fullName evidence="5">Transcription factor MYB64</fullName>
    </recommendedName>
    <alternativeName>
        <fullName evidence="5">Myb-related protein 64</fullName>
        <shortName evidence="5">AtMYB64</shortName>
    </alternativeName>
    <alternativeName>
        <fullName evidence="6">Protein UAS-TAGGED ROOT PATTERNING 10</fullName>
    </alternativeName>
</protein>
<keyword id="KW-0238">DNA-binding</keyword>
<keyword id="KW-0539">Nucleus</keyword>
<keyword id="KW-1185">Reference proteome</keyword>
<keyword id="KW-0677">Repeat</keyword>
<keyword id="KW-0804">Transcription</keyword>
<keyword id="KW-0805">Transcription regulation</keyword>
<gene>
    <name evidence="5" type="primary">MYB64</name>
    <name evidence="6" type="synonym">URP10</name>
    <name evidence="8" type="ordered locus">At5g11050</name>
    <name evidence="9" type="ORF">T5K6.40</name>
</gene>
<dbReference type="EMBL" id="AY032854">
    <property type="protein sequence ID" value="AAK52088.2"/>
    <property type="molecule type" value="mRNA"/>
</dbReference>
<dbReference type="EMBL" id="AY519620">
    <property type="protein sequence ID" value="AAS10090.1"/>
    <property type="molecule type" value="mRNA"/>
</dbReference>
<dbReference type="EMBL" id="AL391222">
    <property type="protein sequence ID" value="CAC03453.1"/>
    <property type="molecule type" value="Genomic_DNA"/>
</dbReference>
<dbReference type="EMBL" id="CP002688">
    <property type="protein sequence ID" value="AED91629.1"/>
    <property type="molecule type" value="Genomic_DNA"/>
</dbReference>
<dbReference type="PIR" id="T51794">
    <property type="entry name" value="T51794"/>
</dbReference>
<dbReference type="RefSeq" id="NP_196666.1">
    <property type="nucleotide sequence ID" value="NM_121143.2"/>
</dbReference>
<dbReference type="SMR" id="Q9FY60"/>
<dbReference type="STRING" id="3702.Q9FY60"/>
<dbReference type="PaxDb" id="3702-AT5G11050.1"/>
<dbReference type="EnsemblPlants" id="AT5G11050.1">
    <property type="protein sequence ID" value="AT5G11050.1"/>
    <property type="gene ID" value="AT5G11050"/>
</dbReference>
<dbReference type="GeneID" id="830972"/>
<dbReference type="Gramene" id="AT5G11050.1">
    <property type="protein sequence ID" value="AT5G11050.1"/>
    <property type="gene ID" value="AT5G11050"/>
</dbReference>
<dbReference type="KEGG" id="ath:AT5G11050"/>
<dbReference type="Araport" id="AT5G11050"/>
<dbReference type="TAIR" id="AT5G11050">
    <property type="gene designation" value="MYB64"/>
</dbReference>
<dbReference type="eggNOG" id="KOG0048">
    <property type="taxonomic scope" value="Eukaryota"/>
</dbReference>
<dbReference type="HOGENOM" id="CLU_034700_1_0_1"/>
<dbReference type="InParanoid" id="Q9FY60"/>
<dbReference type="OMA" id="NIWFPLF"/>
<dbReference type="PhylomeDB" id="Q9FY60"/>
<dbReference type="PRO" id="PR:Q9FY60"/>
<dbReference type="Proteomes" id="UP000006548">
    <property type="component" value="Chromosome 5"/>
</dbReference>
<dbReference type="ExpressionAtlas" id="Q9FY60">
    <property type="expression patterns" value="baseline and differential"/>
</dbReference>
<dbReference type="GO" id="GO:0005634">
    <property type="term" value="C:nucleus"/>
    <property type="evidence" value="ECO:0007669"/>
    <property type="project" value="UniProtKB-SubCell"/>
</dbReference>
<dbReference type="GO" id="GO:0003677">
    <property type="term" value="F:DNA binding"/>
    <property type="evidence" value="ECO:0007669"/>
    <property type="project" value="UniProtKB-KW"/>
</dbReference>
<dbReference type="GO" id="GO:0003700">
    <property type="term" value="F:DNA-binding transcription factor activity"/>
    <property type="evidence" value="ECO:0000250"/>
    <property type="project" value="TAIR"/>
</dbReference>
<dbReference type="GO" id="GO:0051302">
    <property type="term" value="P:regulation of cell division"/>
    <property type="evidence" value="ECO:0000315"/>
    <property type="project" value="TAIR"/>
</dbReference>
<dbReference type="CDD" id="cd00167">
    <property type="entry name" value="SANT"/>
    <property type="match status" value="2"/>
</dbReference>
<dbReference type="FunFam" id="1.10.10.60:FF:000381">
    <property type="entry name" value="Transcription factor MYB119"/>
    <property type="match status" value="1"/>
</dbReference>
<dbReference type="FunFam" id="1.10.10.60:FF:000010">
    <property type="entry name" value="Transcriptional activator Myb isoform A"/>
    <property type="match status" value="1"/>
</dbReference>
<dbReference type="Gene3D" id="1.10.10.60">
    <property type="entry name" value="Homeodomain-like"/>
    <property type="match status" value="2"/>
</dbReference>
<dbReference type="InterPro" id="IPR009057">
    <property type="entry name" value="Homeodomain-like_sf"/>
</dbReference>
<dbReference type="InterPro" id="IPR017930">
    <property type="entry name" value="Myb_dom"/>
</dbReference>
<dbReference type="InterPro" id="IPR050560">
    <property type="entry name" value="MYB_TF"/>
</dbReference>
<dbReference type="InterPro" id="IPR001005">
    <property type="entry name" value="SANT/Myb"/>
</dbReference>
<dbReference type="InterPro" id="IPR017884">
    <property type="entry name" value="SANT_dom"/>
</dbReference>
<dbReference type="PANTHER" id="PTHR45614">
    <property type="entry name" value="MYB PROTEIN-RELATED"/>
    <property type="match status" value="1"/>
</dbReference>
<dbReference type="PANTHER" id="PTHR45614:SF218">
    <property type="entry name" value="TRANSCRIPTION FACTOR MYB119-RELATED"/>
    <property type="match status" value="1"/>
</dbReference>
<dbReference type="Pfam" id="PF13921">
    <property type="entry name" value="Myb_DNA-bind_6"/>
    <property type="match status" value="1"/>
</dbReference>
<dbReference type="SMART" id="SM00717">
    <property type="entry name" value="SANT"/>
    <property type="match status" value="2"/>
</dbReference>
<dbReference type="SUPFAM" id="SSF46689">
    <property type="entry name" value="Homeodomain-like"/>
    <property type="match status" value="1"/>
</dbReference>
<dbReference type="PROSITE" id="PS51294">
    <property type="entry name" value="HTH_MYB"/>
    <property type="match status" value="2"/>
</dbReference>
<feature type="chain" id="PRO_0000440859" description="Transcription factor MYB64">
    <location>
        <begin position="1"/>
        <end position="423"/>
    </location>
</feature>
<feature type="domain" description="HTH myb-type 1" evidence="1">
    <location>
        <begin position="100"/>
        <end position="155"/>
    </location>
</feature>
<feature type="domain" description="HTH myb-type 2" evidence="1">
    <location>
        <begin position="156"/>
        <end position="206"/>
    </location>
</feature>
<feature type="DNA-binding region" description="H-T-H motif" evidence="1">
    <location>
        <begin position="128"/>
        <end position="151"/>
    </location>
</feature>
<feature type="DNA-binding region" description="H-T-H motif" evidence="1">
    <location>
        <begin position="179"/>
        <end position="202"/>
    </location>
</feature>
<feature type="region of interest" description="Disordered" evidence="2">
    <location>
        <begin position="193"/>
        <end position="230"/>
    </location>
</feature>
<feature type="compositionally biased region" description="Basic residues" evidence="2">
    <location>
        <begin position="200"/>
        <end position="214"/>
    </location>
</feature>
<feature type="sequence conflict" description="In Ref. 2; AAK52088." evidence="7" ref="2">
    <original>E</original>
    <variation>G</variation>
    <location>
        <position position="287"/>
    </location>
</feature>
<accession>Q9FY60</accession>
<accession>Q94CG3</accession>
<name>MYB64_ARATH</name>
<comment type="function">
    <text evidence="3 4">Transcription factor required for female gametophyte fertility (PubMed:23057675, PubMed:24068955). Acts redundantly with MYB119 to initiate the FG5 transition during female gametophyte development. The FG5 transition represents the switch between free nuclear divisions and cellularization-differentiation in female gametophyte, and occurs during developmental stage FG5 (PubMed:24068955).</text>
</comment>
<comment type="subcellular location">
    <subcellularLocation>
        <location evidence="1 4">Nucleus</location>
    </subcellularLocation>
</comment>
<comment type="tissue specificity">
    <text evidence="4">Expressed in ovary septum.</text>
</comment>
<comment type="developmental stage">
    <text evidence="4">During female gametogenesis, expressed in the female gametophyte at stage FG4 (four-nucleate stage) in all four nuclei. Expressed in the central cell in unfused polar nuclei at stage FG5 and secondary nucleus at stage FG6. Expressed in the egg cell nucleus during stages FG5 and FG6. Expressed very weakly in mature female gametophytes (stage FG7).</text>
</comment>
<comment type="disruption phenotype">
    <text evidence="4">No visible phenotype under normal growth conditions, but in the double mutant plants myb64 and myb119 the female gametophytes fail to cellularize, resulting in enlarged coenocytes with supernumerary nuclei.</text>
</comment>
<comment type="miscellaneous">
    <text evidence="3">The gain-of-function mutant upd10-D (T-DNA tagging) is infertile.</text>
</comment>
<sequence length="423" mass="48086">MEEQKIQEKSLAHGAAPPLTAVERFLNGQKNEALCFKKQERSIDRPIVKTTRAIEIRNENKENMMFGPRKEKNLAVIGEIVVKGAAKDYTCKDITKKQPYKNIIKGQWTADEDRKLIKLVMQHGERKWAVISEKLEGRAGKQCRERWHNHLRPDIKKDSWSEEEERLLVEAHTRIGNKWAEIAKLIQGRTENSIKNHWNATKRRQNSKRKHKRSKNADSNSDIDDLSPSAKRPRILEDYIKNIENNDKNNGENIMTTSGNNVLSTSNYDQFNSEDSTSSLLDDPYDEELVFLKNIFENHSLENINLSQGTEITQSSSSGFMIENPKPKPNLYNNTFGTHLGAMVTEPANSSHLASDIYLSDLLNGTASSSSSLTFLSSNNNEHAGENELLLPQANSTSERREMDLIEMLSGSTQGSNIWFPLF</sequence>